<accession>P84688</accession>
<accession>H1ZZH6</accession>
<reference key="1">
    <citation type="journal article" date="2012" name="PLoS ONE">
        <title>Identification and phylogenetic analysis of Tityus pachyurus and Tityus obscurus novel putative Na+-channel scorpion toxins.</title>
        <authorList>
            <person name="Guerrero-Vargas J.A."/>
            <person name="Mourao C.B."/>
            <person name="Quintero-Hernandez V."/>
            <person name="Possani L.D."/>
            <person name="Schwartz E.F."/>
        </authorList>
    </citation>
    <scope>NUCLEOTIDE SEQUENCE [MRNA]</scope>
    <scope>NOMENCLATURE</scope>
    <source>
        <tissue>Venom gland</tissue>
    </source>
</reference>
<reference evidence="4" key="2">
    <citation type="journal article" date="2004" name="J. Chromatogr. B">
        <title>Proteomics of the venom from the Amazonian scorpion Tityus cambridgei and the role of prolines on mass spectrometry analysis of toxins.</title>
        <authorList>
            <person name="Batista C.V.F."/>
            <person name="del Pozo L."/>
            <person name="Zamudio F.Z."/>
            <person name="Contreras S."/>
            <person name="Becerril B."/>
            <person name="Wanke E."/>
            <person name="Possani L.D."/>
        </authorList>
    </citation>
    <scope>PROTEIN SEQUENCE OF 21-30</scope>
    <scope>SUBCELLULAR LOCATION</scope>
    <scope>TISSUE SPECIFICITY</scope>
    <scope>MASS SPECTROMETRY</scope>
    <source>
        <tissue evidence="3">Venom</tissue>
    </source>
</reference>
<proteinExistence type="evidence at protein level"/>
<name>SCX7_TITOB</name>
<comment type="function">
    <text evidence="1">Inhibits voltage-gated sodium channels (Nav).</text>
</comment>
<comment type="subcellular location">
    <subcellularLocation>
        <location evidence="3">Secreted</location>
    </subcellularLocation>
</comment>
<comment type="tissue specificity">
    <text evidence="3">Expressed by the venom gland.</text>
</comment>
<comment type="domain">
    <text evidence="4">Has the structural arrangement of an alpha-helix connected to antiparallel beta-sheets by disulfide bonds (CS-alpha/beta).</text>
</comment>
<comment type="mass spectrometry" mass="7073.0" method="Electrospray" evidence="3"/>
<comment type="similarity">
    <text evidence="4">Belongs to the long (4 C-C) scorpion toxin superfamily. Sodium channel inhibitor family.</text>
</comment>
<organism>
    <name type="scientific">Tityus obscurus</name>
    <name type="common">Amazonian scorpion</name>
    <name type="synonym">Tityus cambridgei</name>
    <dbReference type="NCBI Taxonomy" id="1221240"/>
    <lineage>
        <taxon>Eukaryota</taxon>
        <taxon>Metazoa</taxon>
        <taxon>Ecdysozoa</taxon>
        <taxon>Arthropoda</taxon>
        <taxon>Chelicerata</taxon>
        <taxon>Arachnida</taxon>
        <taxon>Scorpiones</taxon>
        <taxon>Buthida</taxon>
        <taxon>Buthoidea</taxon>
        <taxon>Buthidae</taxon>
        <taxon>Tityus</taxon>
    </lineage>
</organism>
<sequence length="84" mass="9237">MSIFPIVLALLLIGLEETEALDGYPLSKINNCKIYCPDDDVCKWTCKHRAGATNGKGDCIWYGCYCYDVAPGTKMYPGSSPCYA</sequence>
<evidence type="ECO:0000250" key="1"/>
<evidence type="ECO:0000255" key="2">
    <source>
        <dbReference type="PROSITE-ProRule" id="PRU01210"/>
    </source>
</evidence>
<evidence type="ECO:0000269" key="3">
    <source>
    </source>
</evidence>
<evidence type="ECO:0000305" key="4"/>
<keyword id="KW-0903">Direct protein sequencing</keyword>
<keyword id="KW-1015">Disulfide bond</keyword>
<keyword id="KW-0872">Ion channel impairing toxin</keyword>
<keyword id="KW-0528">Neurotoxin</keyword>
<keyword id="KW-0964">Secreted</keyword>
<keyword id="KW-0732">Signal</keyword>
<keyword id="KW-0800">Toxin</keyword>
<keyword id="KW-0738">Voltage-gated sodium channel impairing toxin</keyword>
<protein>
    <recommendedName>
        <fullName>Toxin To7</fullName>
    </recommendedName>
    <alternativeName>
        <fullName>PT-alpha* NaTx7.6</fullName>
    </alternativeName>
    <alternativeName>
        <fullName>Toxin Tc50</fullName>
    </alternativeName>
    <alternativeName>
        <fullName>Toxin To50</fullName>
    </alternativeName>
</protein>
<feature type="signal peptide" evidence="3">
    <location>
        <begin position="1"/>
        <end position="20"/>
    </location>
</feature>
<feature type="chain" id="PRO_5000851426" description="Toxin To7">
    <location>
        <begin position="21"/>
        <end position="84"/>
    </location>
</feature>
<feature type="domain" description="LCN-type CS-alpha/beta" evidence="2">
    <location>
        <begin position="21"/>
        <end position="83"/>
    </location>
</feature>
<feature type="disulfide bond" evidence="2">
    <location>
        <begin position="32"/>
        <end position="82"/>
    </location>
</feature>
<feature type="disulfide bond" evidence="2">
    <location>
        <begin position="36"/>
        <end position="59"/>
    </location>
</feature>
<feature type="disulfide bond" evidence="2">
    <location>
        <begin position="42"/>
        <end position="64"/>
    </location>
</feature>
<feature type="disulfide bond" evidence="2">
    <location>
        <begin position="46"/>
        <end position="66"/>
    </location>
</feature>
<dbReference type="EMBL" id="HE585230">
    <property type="protein sequence ID" value="CCD31424.1"/>
    <property type="molecule type" value="mRNA"/>
</dbReference>
<dbReference type="SMR" id="P84688"/>
<dbReference type="GO" id="GO:0005576">
    <property type="term" value="C:extracellular region"/>
    <property type="evidence" value="ECO:0007005"/>
    <property type="project" value="UniProtKB"/>
</dbReference>
<dbReference type="GO" id="GO:0008200">
    <property type="term" value="F:ion channel inhibitor activity"/>
    <property type="evidence" value="ECO:0007669"/>
    <property type="project" value="InterPro"/>
</dbReference>
<dbReference type="GO" id="GO:0017080">
    <property type="term" value="F:sodium channel regulator activity"/>
    <property type="evidence" value="ECO:0007669"/>
    <property type="project" value="UniProtKB-KW"/>
</dbReference>
<dbReference type="GO" id="GO:0090729">
    <property type="term" value="F:toxin activity"/>
    <property type="evidence" value="ECO:0007669"/>
    <property type="project" value="UniProtKB-KW"/>
</dbReference>
<dbReference type="Gene3D" id="3.30.30.10">
    <property type="entry name" value="Knottin, scorpion toxin-like"/>
    <property type="match status" value="1"/>
</dbReference>
<dbReference type="InterPro" id="IPR044062">
    <property type="entry name" value="LCN-type_CS_alpha_beta_dom"/>
</dbReference>
<dbReference type="InterPro" id="IPR036574">
    <property type="entry name" value="Scorpion_toxin-like_sf"/>
</dbReference>
<dbReference type="SUPFAM" id="SSF57095">
    <property type="entry name" value="Scorpion toxin-like"/>
    <property type="match status" value="1"/>
</dbReference>
<dbReference type="PROSITE" id="PS51863">
    <property type="entry name" value="LCN_CSAB"/>
    <property type="match status" value="1"/>
</dbReference>